<dbReference type="STRING" id="13249.P85825"/>
<dbReference type="InParanoid" id="P85825"/>
<dbReference type="Proteomes" id="UP000015103">
    <property type="component" value="Unassembled WGS sequence"/>
</dbReference>
<dbReference type="GO" id="GO:0007218">
    <property type="term" value="P:neuropeptide signaling pathway"/>
    <property type="evidence" value="ECO:0007669"/>
    <property type="project" value="UniProtKB-KW"/>
</dbReference>
<reference evidence="3" key="1">
    <citation type="journal article" date="2009" name="Proteomics">
        <title>The neuropeptidome of Rhodnius prolixus brain.</title>
        <authorList>
            <person name="Ons S."/>
            <person name="Richter F."/>
            <person name="Urlaub H."/>
            <person name="Pomar R.R."/>
        </authorList>
    </citation>
    <scope>PROTEIN SEQUENCE</scope>
    <scope>MASS SPECTROMETRY</scope>
    <scope>AMIDATION AT PHE-13</scope>
    <source>
        <tissue evidence="1">Brain</tissue>
    </source>
</reference>
<proteinExistence type="evidence at protein level"/>
<comment type="mass spectrometry">
    <molecule>Allatotropin</molecule>
</comment>
<comment type="mass spectrometry">
    <molecule>Allatotropin(2-13)</molecule>
</comment>
<comment type="mass spectrometry">
    <molecule>Allatotropin(4-13)</molecule>
</comment>
<sequence>GFKNVQLSTARGF</sequence>
<feature type="peptide" id="PRO_0000365747" description="Allatotropin" evidence="1">
    <location>
        <begin position="1"/>
        <end position="13"/>
    </location>
</feature>
<feature type="peptide" id="PRO_0000365748" description="Allatotropin(2-13)" evidence="1">
    <location>
        <begin position="2"/>
        <end position="13"/>
    </location>
</feature>
<feature type="peptide" id="PRO_0000365749" description="Allatotropin(4-13)" evidence="1">
    <location>
        <begin position="4"/>
        <end position="13"/>
    </location>
</feature>
<feature type="modified residue" description="Phenylalanine amide" evidence="1">
    <location>
        <position position="13"/>
    </location>
</feature>
<feature type="unsure residue" description="L or I" evidence="1">
    <location>
        <position position="7"/>
    </location>
</feature>
<accession>P85825</accession>
<keyword id="KW-0027">Amidation</keyword>
<keyword id="KW-0903">Direct protein sequencing</keyword>
<keyword id="KW-0527">Neuropeptide</keyword>
<keyword id="KW-1185">Reference proteome</keyword>
<name>ALLT_RHOPR</name>
<protein>
    <recommendedName>
        <fullName evidence="2">Allatotropin</fullName>
        <shortName evidence="2">Rhopr-AT</shortName>
    </recommendedName>
    <component>
        <recommendedName>
            <fullName evidence="2">Allatotropin(2-13)</fullName>
            <shortName evidence="2">RRhopr-AT(2-13)</shortName>
        </recommendedName>
    </component>
    <component>
        <recommendedName>
            <fullName evidence="2">Allatotropin(4-13)</fullName>
            <shortName evidence="2">RRhopr-AT(4-13)</shortName>
        </recommendedName>
    </component>
</protein>
<evidence type="ECO:0000269" key="1">
    <source>
    </source>
</evidence>
<evidence type="ECO:0000303" key="2">
    <source>
    </source>
</evidence>
<evidence type="ECO:0000305" key="3"/>
<organism>
    <name type="scientific">Rhodnius prolixus</name>
    <name type="common">Triatomid bug</name>
    <dbReference type="NCBI Taxonomy" id="13249"/>
    <lineage>
        <taxon>Eukaryota</taxon>
        <taxon>Metazoa</taxon>
        <taxon>Ecdysozoa</taxon>
        <taxon>Arthropoda</taxon>
        <taxon>Hexapoda</taxon>
        <taxon>Insecta</taxon>
        <taxon>Pterygota</taxon>
        <taxon>Neoptera</taxon>
        <taxon>Paraneoptera</taxon>
        <taxon>Hemiptera</taxon>
        <taxon>Heteroptera</taxon>
        <taxon>Panheteroptera</taxon>
        <taxon>Cimicomorpha</taxon>
        <taxon>Reduviidae</taxon>
        <taxon>Triatominae</taxon>
        <taxon>Rhodnius</taxon>
    </lineage>
</organism>